<dbReference type="EMBL" id="AL049480">
    <property type="protein sequence ID" value="CAB39604.1"/>
    <property type="status" value="ALT_SEQ"/>
    <property type="molecule type" value="Genomic_DNA"/>
</dbReference>
<dbReference type="EMBL" id="AL161564">
    <property type="protein sequence ID" value="CAB79438.1"/>
    <property type="status" value="ALT_SEQ"/>
    <property type="molecule type" value="Genomic_DNA"/>
</dbReference>
<dbReference type="EMBL" id="CP002687">
    <property type="protein sequence ID" value="AEE85119.1"/>
    <property type="molecule type" value="Genomic_DNA"/>
</dbReference>
<dbReference type="EMBL" id="AK175371">
    <property type="protein sequence ID" value="BAD43134.1"/>
    <property type="molecule type" value="mRNA"/>
</dbReference>
<dbReference type="EMBL" id="AK175732">
    <property type="protein sequence ID" value="BAD43495.1"/>
    <property type="molecule type" value="mRNA"/>
</dbReference>
<dbReference type="EMBL" id="AK176002">
    <property type="protein sequence ID" value="BAD43765.1"/>
    <property type="molecule type" value="mRNA"/>
</dbReference>
<dbReference type="EMBL" id="AK176011">
    <property type="protein sequence ID" value="BAD43774.1"/>
    <property type="molecule type" value="mRNA"/>
</dbReference>
<dbReference type="EMBL" id="AK176089">
    <property type="protein sequence ID" value="BAD43852.1"/>
    <property type="molecule type" value="mRNA"/>
</dbReference>
<dbReference type="EMBL" id="AK229626">
    <property type="protein sequence ID" value="BAF01471.1"/>
    <property type="molecule type" value="mRNA"/>
</dbReference>
<dbReference type="EMBL" id="AY088797">
    <property type="protein sequence ID" value="AAM67108.1"/>
    <property type="molecule type" value="mRNA"/>
</dbReference>
<dbReference type="PIR" id="T04237">
    <property type="entry name" value="T04237"/>
</dbReference>
<dbReference type="RefSeq" id="NP_567729.1">
    <property type="nucleotide sequence ID" value="NM_118715.4"/>
</dbReference>
<dbReference type="SMR" id="Q8L8U9"/>
<dbReference type="FunCoup" id="Q8L8U9">
    <property type="interactions" value="69"/>
</dbReference>
<dbReference type="STRING" id="3702.Q8L8U9"/>
<dbReference type="GlyGen" id="Q8L8U9">
    <property type="glycosylation" value="1 site"/>
</dbReference>
<dbReference type="PaxDb" id="3702-AT4G25830.1"/>
<dbReference type="ProteomicsDB" id="222628"/>
<dbReference type="EnsemblPlants" id="AT4G25830.1">
    <property type="protein sequence ID" value="AT4G25830.1"/>
    <property type="gene ID" value="AT4G25830"/>
</dbReference>
<dbReference type="GeneID" id="828688"/>
<dbReference type="Gramene" id="AT4G25830.1">
    <property type="protein sequence ID" value="AT4G25830.1"/>
    <property type="gene ID" value="AT4G25830"/>
</dbReference>
<dbReference type="KEGG" id="ath:AT4G25830"/>
<dbReference type="Araport" id="AT4G25830"/>
<dbReference type="TAIR" id="AT4G25830">
    <property type="gene designation" value="CASPL2C1"/>
</dbReference>
<dbReference type="eggNOG" id="KOG0743">
    <property type="taxonomic scope" value="Eukaryota"/>
</dbReference>
<dbReference type="HOGENOM" id="CLU_066104_0_1_1"/>
<dbReference type="InParanoid" id="Q8L8U9"/>
<dbReference type="OMA" id="LARCLYM"/>
<dbReference type="PhylomeDB" id="Q8L8U9"/>
<dbReference type="PRO" id="PR:Q8L8U9"/>
<dbReference type="Proteomes" id="UP000006548">
    <property type="component" value="Chromosome 4"/>
</dbReference>
<dbReference type="ExpressionAtlas" id="Q8L8U9">
    <property type="expression patterns" value="baseline and differential"/>
</dbReference>
<dbReference type="GO" id="GO:0005886">
    <property type="term" value="C:plasma membrane"/>
    <property type="evidence" value="ECO:0007669"/>
    <property type="project" value="UniProtKB-SubCell"/>
</dbReference>
<dbReference type="InterPro" id="IPR006459">
    <property type="entry name" value="CASP/CASPL"/>
</dbReference>
<dbReference type="InterPro" id="IPR006702">
    <property type="entry name" value="CASP_dom"/>
</dbReference>
<dbReference type="NCBIfam" id="TIGR01569">
    <property type="entry name" value="A_tha_TIGR01569"/>
    <property type="match status" value="1"/>
</dbReference>
<dbReference type="PANTHER" id="PTHR33573:SF30">
    <property type="entry name" value="CASP-LIKE PROTEIN 2C1-RELATED"/>
    <property type="match status" value="1"/>
</dbReference>
<dbReference type="PANTHER" id="PTHR33573">
    <property type="entry name" value="CASP-LIKE PROTEIN 4A4"/>
    <property type="match status" value="1"/>
</dbReference>
<dbReference type="Pfam" id="PF04535">
    <property type="entry name" value="CASP_dom"/>
    <property type="match status" value="1"/>
</dbReference>
<keyword id="KW-1003">Cell membrane</keyword>
<keyword id="KW-0325">Glycoprotein</keyword>
<keyword id="KW-0472">Membrane</keyword>
<keyword id="KW-1185">Reference proteome</keyword>
<keyword id="KW-0812">Transmembrane</keyword>
<keyword id="KW-1133">Transmembrane helix</keyword>
<proteinExistence type="evidence at transcript level"/>
<sequence length="175" mass="20091">MVKLRETEVILRLCIVFFLLLTSCLIGLDSQTKEIAYIHKNVSFRYLLALEAELYIDVVVAAYNLVQLGLGWYNVEQKTSNPKWFSYLLDQTAAYVVFAGTSAAAQHSLLVVTGSRELQWMKWCYKFTRFCFQMGSAIILNYIAAALMVLLSSISAFNLFRLYSPKRFFRFKSSS</sequence>
<comment type="subunit">
    <text evidence="1">Homodimer and heterodimers.</text>
</comment>
<comment type="subcellular location">
    <subcellularLocation>
        <location evidence="1">Cell membrane</location>
        <topology evidence="1">Multi-pass membrane protein</topology>
    </subcellularLocation>
</comment>
<comment type="similarity">
    <text evidence="3">Belongs to the Casparian strip membrane proteins (CASP) family.</text>
</comment>
<comment type="sequence caution" evidence="3">
    <conflict type="erroneous gene model prediction">
        <sequence resource="EMBL-CDS" id="CAB39604"/>
    </conflict>
    <text>The predicted gene At4g25830 has been split into 2 genes: At4g25830 and At4g25835.</text>
</comment>
<comment type="sequence caution" evidence="3">
    <conflict type="erroneous gene model prediction">
        <sequence resource="EMBL-CDS" id="CAB79438"/>
    </conflict>
    <text>The predicted gene At4g25830 has been split into 2 genes: At4g25830 and At4g25835.</text>
</comment>
<reference key="1">
    <citation type="journal article" date="1999" name="Nature">
        <title>Sequence and analysis of chromosome 4 of the plant Arabidopsis thaliana.</title>
        <authorList>
            <person name="Mayer K.F.X."/>
            <person name="Schueller C."/>
            <person name="Wambutt R."/>
            <person name="Murphy G."/>
            <person name="Volckaert G."/>
            <person name="Pohl T."/>
            <person name="Duesterhoeft A."/>
            <person name="Stiekema W."/>
            <person name="Entian K.-D."/>
            <person name="Terryn N."/>
            <person name="Harris B."/>
            <person name="Ansorge W."/>
            <person name="Brandt P."/>
            <person name="Grivell L.A."/>
            <person name="Rieger M."/>
            <person name="Weichselgartner M."/>
            <person name="de Simone V."/>
            <person name="Obermaier B."/>
            <person name="Mache R."/>
            <person name="Mueller M."/>
            <person name="Kreis M."/>
            <person name="Delseny M."/>
            <person name="Puigdomenech P."/>
            <person name="Watson M."/>
            <person name="Schmidtheini T."/>
            <person name="Reichert B."/>
            <person name="Portetelle D."/>
            <person name="Perez-Alonso M."/>
            <person name="Boutry M."/>
            <person name="Bancroft I."/>
            <person name="Vos P."/>
            <person name="Hoheisel J."/>
            <person name="Zimmermann W."/>
            <person name="Wedler H."/>
            <person name="Ridley P."/>
            <person name="Langham S.-A."/>
            <person name="McCullagh B."/>
            <person name="Bilham L."/>
            <person name="Robben J."/>
            <person name="van der Schueren J."/>
            <person name="Grymonprez B."/>
            <person name="Chuang Y.-J."/>
            <person name="Vandenbussche F."/>
            <person name="Braeken M."/>
            <person name="Weltjens I."/>
            <person name="Voet M."/>
            <person name="Bastiaens I."/>
            <person name="Aert R."/>
            <person name="Defoor E."/>
            <person name="Weitzenegger T."/>
            <person name="Bothe G."/>
            <person name="Ramsperger U."/>
            <person name="Hilbert H."/>
            <person name="Braun M."/>
            <person name="Holzer E."/>
            <person name="Brandt A."/>
            <person name="Peters S."/>
            <person name="van Staveren M."/>
            <person name="Dirkse W."/>
            <person name="Mooijman P."/>
            <person name="Klein Lankhorst R."/>
            <person name="Rose M."/>
            <person name="Hauf J."/>
            <person name="Koetter P."/>
            <person name="Berneiser S."/>
            <person name="Hempel S."/>
            <person name="Feldpausch M."/>
            <person name="Lamberth S."/>
            <person name="Van den Daele H."/>
            <person name="De Keyser A."/>
            <person name="Buysshaert C."/>
            <person name="Gielen J."/>
            <person name="Villarroel R."/>
            <person name="De Clercq R."/>
            <person name="van Montagu M."/>
            <person name="Rogers J."/>
            <person name="Cronin A."/>
            <person name="Quail M.A."/>
            <person name="Bray-Allen S."/>
            <person name="Clark L."/>
            <person name="Doggett J."/>
            <person name="Hall S."/>
            <person name="Kay M."/>
            <person name="Lennard N."/>
            <person name="McLay K."/>
            <person name="Mayes R."/>
            <person name="Pettett A."/>
            <person name="Rajandream M.A."/>
            <person name="Lyne M."/>
            <person name="Benes V."/>
            <person name="Rechmann S."/>
            <person name="Borkova D."/>
            <person name="Bloecker H."/>
            <person name="Scharfe M."/>
            <person name="Grimm M."/>
            <person name="Loehnert T.-H."/>
            <person name="Dose S."/>
            <person name="de Haan M."/>
            <person name="Maarse A.C."/>
            <person name="Schaefer M."/>
            <person name="Mueller-Auer S."/>
            <person name="Gabel C."/>
            <person name="Fuchs M."/>
            <person name="Fartmann B."/>
            <person name="Granderath K."/>
            <person name="Dauner D."/>
            <person name="Herzl A."/>
            <person name="Neumann S."/>
            <person name="Argiriou A."/>
            <person name="Vitale D."/>
            <person name="Liguori R."/>
            <person name="Piravandi E."/>
            <person name="Massenet O."/>
            <person name="Quigley F."/>
            <person name="Clabauld G."/>
            <person name="Muendlein A."/>
            <person name="Felber R."/>
            <person name="Schnabl S."/>
            <person name="Hiller R."/>
            <person name="Schmidt W."/>
            <person name="Lecharny A."/>
            <person name="Aubourg S."/>
            <person name="Chefdor F."/>
            <person name="Cooke R."/>
            <person name="Berger C."/>
            <person name="Monfort A."/>
            <person name="Casacuberta E."/>
            <person name="Gibbons T."/>
            <person name="Weber N."/>
            <person name="Vandenbol M."/>
            <person name="Bargues M."/>
            <person name="Terol J."/>
            <person name="Torres A."/>
            <person name="Perez-Perez A."/>
            <person name="Purnelle B."/>
            <person name="Bent E."/>
            <person name="Johnson S."/>
            <person name="Tacon D."/>
            <person name="Jesse T."/>
            <person name="Heijnen L."/>
            <person name="Schwarz S."/>
            <person name="Scholler P."/>
            <person name="Heber S."/>
            <person name="Francs P."/>
            <person name="Bielke C."/>
            <person name="Frishman D."/>
            <person name="Haase D."/>
            <person name="Lemcke K."/>
            <person name="Mewes H.-W."/>
            <person name="Stocker S."/>
            <person name="Zaccaria P."/>
            <person name="Bevan M."/>
            <person name="Wilson R.K."/>
            <person name="de la Bastide M."/>
            <person name="Habermann K."/>
            <person name="Parnell L."/>
            <person name="Dedhia N."/>
            <person name="Gnoj L."/>
            <person name="Schutz K."/>
            <person name="Huang E."/>
            <person name="Spiegel L."/>
            <person name="Sekhon M."/>
            <person name="Murray J."/>
            <person name="Sheet P."/>
            <person name="Cordes M."/>
            <person name="Abu-Threideh J."/>
            <person name="Stoneking T."/>
            <person name="Kalicki J."/>
            <person name="Graves T."/>
            <person name="Harmon G."/>
            <person name="Edwards J."/>
            <person name="Latreille P."/>
            <person name="Courtney L."/>
            <person name="Cloud J."/>
            <person name="Abbott A."/>
            <person name="Scott K."/>
            <person name="Johnson D."/>
            <person name="Minx P."/>
            <person name="Bentley D."/>
            <person name="Fulton B."/>
            <person name="Miller N."/>
            <person name="Greco T."/>
            <person name="Kemp K."/>
            <person name="Kramer J."/>
            <person name="Fulton L."/>
            <person name="Mardis E."/>
            <person name="Dante M."/>
            <person name="Pepin K."/>
            <person name="Hillier L.W."/>
            <person name="Nelson J."/>
            <person name="Spieth J."/>
            <person name="Ryan E."/>
            <person name="Andrews S."/>
            <person name="Geisel C."/>
            <person name="Layman D."/>
            <person name="Du H."/>
            <person name="Ali J."/>
            <person name="Berghoff A."/>
            <person name="Jones K."/>
            <person name="Drone K."/>
            <person name="Cotton M."/>
            <person name="Joshu C."/>
            <person name="Antonoiu B."/>
            <person name="Zidanic M."/>
            <person name="Strong C."/>
            <person name="Sun H."/>
            <person name="Lamar B."/>
            <person name="Yordan C."/>
            <person name="Ma P."/>
            <person name="Zhong J."/>
            <person name="Preston R."/>
            <person name="Vil D."/>
            <person name="Shekher M."/>
            <person name="Matero A."/>
            <person name="Shah R."/>
            <person name="Swaby I.K."/>
            <person name="O'Shaughnessy A."/>
            <person name="Rodriguez M."/>
            <person name="Hoffman J."/>
            <person name="Till S."/>
            <person name="Granat S."/>
            <person name="Shohdy N."/>
            <person name="Hasegawa A."/>
            <person name="Hameed A."/>
            <person name="Lodhi M."/>
            <person name="Johnson A."/>
            <person name="Chen E."/>
            <person name="Marra M.A."/>
            <person name="Martienssen R."/>
            <person name="McCombie W.R."/>
        </authorList>
    </citation>
    <scope>NUCLEOTIDE SEQUENCE [LARGE SCALE GENOMIC DNA]</scope>
    <source>
        <strain>cv. Columbia</strain>
    </source>
</reference>
<reference key="2">
    <citation type="journal article" date="2017" name="Plant J.">
        <title>Araport11: a complete reannotation of the Arabidopsis thaliana reference genome.</title>
        <authorList>
            <person name="Cheng C.Y."/>
            <person name="Krishnakumar V."/>
            <person name="Chan A.P."/>
            <person name="Thibaud-Nissen F."/>
            <person name="Schobel S."/>
            <person name="Town C.D."/>
        </authorList>
    </citation>
    <scope>GENOME REANNOTATION</scope>
    <source>
        <strain>cv. Columbia</strain>
    </source>
</reference>
<reference key="3">
    <citation type="submission" date="2006-07" db="EMBL/GenBank/DDBJ databases">
        <title>Large-scale analysis of RIKEN Arabidopsis full-length (RAFL) cDNAs.</title>
        <authorList>
            <person name="Totoki Y."/>
            <person name="Seki M."/>
            <person name="Ishida J."/>
            <person name="Nakajima M."/>
            <person name="Enju A."/>
            <person name="Kamiya A."/>
            <person name="Narusaka M."/>
            <person name="Shin-i T."/>
            <person name="Nakagawa M."/>
            <person name="Sakamoto N."/>
            <person name="Oishi K."/>
            <person name="Kohara Y."/>
            <person name="Kobayashi M."/>
            <person name="Toyoda A."/>
            <person name="Sakaki Y."/>
            <person name="Sakurai T."/>
            <person name="Iida K."/>
            <person name="Akiyama K."/>
            <person name="Satou M."/>
            <person name="Toyoda T."/>
            <person name="Konagaya A."/>
            <person name="Carninci P."/>
            <person name="Kawai J."/>
            <person name="Hayashizaki Y."/>
            <person name="Shinozaki K."/>
        </authorList>
    </citation>
    <scope>NUCLEOTIDE SEQUENCE [LARGE SCALE MRNA]</scope>
    <source>
        <strain>cv. Columbia</strain>
    </source>
</reference>
<reference key="4">
    <citation type="submission" date="2002-03" db="EMBL/GenBank/DDBJ databases">
        <title>Full-length cDNA from Arabidopsis thaliana.</title>
        <authorList>
            <person name="Brover V.V."/>
            <person name="Troukhan M.E."/>
            <person name="Alexandrov N.A."/>
            <person name="Lu Y.-P."/>
            <person name="Flavell R.B."/>
            <person name="Feldmann K.A."/>
        </authorList>
    </citation>
    <scope>NUCLEOTIDE SEQUENCE [LARGE SCALE MRNA]</scope>
</reference>
<reference key="5">
    <citation type="journal article" date="2014" name="Plant Physiol.">
        <title>Functional and evolutionary analysis of the CASPARIAN STRIP MEMBRANE DOMAIN PROTEIN family.</title>
        <authorList>
            <person name="Roppolo D."/>
            <person name="Boeckmann B."/>
            <person name="Pfister A."/>
            <person name="Boutet E."/>
            <person name="Rubio M.C."/>
            <person name="Denervaud-Tendon V."/>
            <person name="Vermeer J.E."/>
            <person name="Gheyselinck J."/>
            <person name="Xenarios I."/>
            <person name="Geldner N."/>
        </authorList>
    </citation>
    <scope>GENE FAMILY</scope>
    <scope>NOMENCLATURE</scope>
</reference>
<gene>
    <name type="ordered locus">At4g25830</name>
    <name type="ORF">F14M19.9</name>
</gene>
<organism>
    <name type="scientific">Arabidopsis thaliana</name>
    <name type="common">Mouse-ear cress</name>
    <dbReference type="NCBI Taxonomy" id="3702"/>
    <lineage>
        <taxon>Eukaryota</taxon>
        <taxon>Viridiplantae</taxon>
        <taxon>Streptophyta</taxon>
        <taxon>Embryophyta</taxon>
        <taxon>Tracheophyta</taxon>
        <taxon>Spermatophyta</taxon>
        <taxon>Magnoliopsida</taxon>
        <taxon>eudicotyledons</taxon>
        <taxon>Gunneridae</taxon>
        <taxon>Pentapetalae</taxon>
        <taxon>rosids</taxon>
        <taxon>malvids</taxon>
        <taxon>Brassicales</taxon>
        <taxon>Brassicaceae</taxon>
        <taxon>Camelineae</taxon>
        <taxon>Arabidopsis</taxon>
    </lineage>
</organism>
<accession>Q8L8U9</accession>
<accession>Q9SW02</accession>
<protein>
    <recommendedName>
        <fullName>CASP-like protein 2C1</fullName>
        <shortName>AtCASPL2C1</shortName>
    </recommendedName>
</protein>
<name>CSPLS_ARATH</name>
<feature type="chain" id="PRO_0000308681" description="CASP-like protein 2C1">
    <location>
        <begin position="1"/>
        <end position="175"/>
    </location>
</feature>
<feature type="topological domain" description="Cytoplasmic" evidence="2">
    <location>
        <begin position="1"/>
        <end position="7"/>
    </location>
</feature>
<feature type="transmembrane region" description="Helical" evidence="2">
    <location>
        <begin position="8"/>
        <end position="28"/>
    </location>
</feature>
<feature type="topological domain" description="Extracellular" evidence="2">
    <location>
        <begin position="29"/>
        <end position="45"/>
    </location>
</feature>
<feature type="transmembrane region" description="Helical" evidence="2">
    <location>
        <begin position="46"/>
        <end position="66"/>
    </location>
</feature>
<feature type="topological domain" description="Cytoplasmic" evidence="2">
    <location>
        <begin position="67"/>
        <end position="91"/>
    </location>
</feature>
<feature type="transmembrane region" description="Helical" evidence="2">
    <location>
        <begin position="92"/>
        <end position="112"/>
    </location>
</feature>
<feature type="topological domain" description="Extracellular" evidence="2">
    <location>
        <begin position="113"/>
        <end position="136"/>
    </location>
</feature>
<feature type="transmembrane region" description="Helical" evidence="2">
    <location>
        <begin position="137"/>
        <end position="157"/>
    </location>
</feature>
<feature type="topological domain" description="Cytoplasmic" evidence="2">
    <location>
        <begin position="158"/>
        <end position="175"/>
    </location>
</feature>
<feature type="glycosylation site" description="N-linked (GlcNAc...) asparagine" evidence="2">
    <location>
        <position position="41"/>
    </location>
</feature>
<evidence type="ECO:0000250" key="1"/>
<evidence type="ECO:0000255" key="2"/>
<evidence type="ECO:0000305" key="3"/>